<feature type="signal peptide" evidence="2">
    <location>
        <begin position="1"/>
        <end position="33"/>
    </location>
</feature>
<feature type="chain" id="PRO_0000045773" description="BMP/retinoic acid-inducible neural-specific protein 2">
    <location>
        <begin position="34"/>
        <end position="783"/>
    </location>
</feature>
<feature type="domain" description="MACPF">
    <location>
        <begin position="85"/>
        <end position="281"/>
    </location>
</feature>
<feature type="glycosylation site" description="N-linked (GlcNAc...) asparagine" evidence="2">
    <location>
        <position position="185"/>
    </location>
</feature>
<feature type="glycosylation site" description="N-linked (GlcNAc...) asparagine" evidence="2">
    <location>
        <position position="354"/>
    </location>
</feature>
<feature type="glycosylation site" description="N-linked (GlcNAc...) asparagine" evidence="2">
    <location>
        <position position="473"/>
    </location>
</feature>
<feature type="glycosylation site" description="N-linked (GlcNAc...) asparagine" evidence="2">
    <location>
        <position position="579"/>
    </location>
</feature>
<feature type="glycosylation site" description="N-linked (GlcNAc...) asparagine" evidence="2">
    <location>
        <position position="626"/>
    </location>
</feature>
<feature type="glycosylation site" description="N-linked (GlcNAc...) asparagine" evidence="2">
    <location>
        <position position="658"/>
    </location>
</feature>
<comment type="function">
    <text evidence="1">Inhibits neuronal cell proliferation by negative regulation of the cell cycle transition.</text>
</comment>
<comment type="subcellular location">
    <subcellularLocation>
        <location evidence="4">Secreted</location>
    </subcellularLocation>
</comment>
<comment type="tissue specificity">
    <text evidence="3">Expressed in olfactory bulb, cerebellum and neuronal layers in hippocampus.</text>
</comment>
<comment type="developmental stage">
    <text evidence="3">Expressed from 11.5 dpc.</text>
</comment>
<comment type="similarity">
    <text evidence="4">Belongs to the BRINP family.</text>
</comment>
<proteinExistence type="evidence at transcript level"/>
<protein>
    <recommendedName>
        <fullName>BMP/retinoic acid-inducible neural-specific protein 2</fullName>
    </recommendedName>
</protein>
<reference key="1">
    <citation type="journal article" date="2004" name="Brain Res. Mol. Brain Res.">
        <title>Identification and characterization of novel developmentally regulated neural-specific proteins, BRINP family.</title>
        <authorList>
            <person name="Kawano H."/>
            <person name="Nakatani T."/>
            <person name="Mori T."/>
            <person name="Ueno S."/>
            <person name="Fukaya M."/>
            <person name="Abe A."/>
            <person name="Kobayashi M."/>
            <person name="Toda F."/>
            <person name="Watanabe M."/>
            <person name="Matsuoka I."/>
        </authorList>
    </citation>
    <scope>NUCLEOTIDE SEQUENCE [MRNA]</scope>
    <scope>TISSUE SPECIFICITY</scope>
    <scope>DEVELOPMENTAL STAGE</scope>
</reference>
<dbReference type="EMBL" id="AB077853">
    <property type="protein sequence ID" value="BAC03099.1"/>
    <property type="molecule type" value="mRNA"/>
</dbReference>
<dbReference type="RefSeq" id="NP_775138.1">
    <property type="nucleotide sequence ID" value="NM_173115.2"/>
</dbReference>
<dbReference type="RefSeq" id="XP_038946339.1">
    <property type="nucleotide sequence ID" value="XM_039090411.2"/>
</dbReference>
<dbReference type="RefSeq" id="XP_038946340.1">
    <property type="nucleotide sequence ID" value="XM_039090412.2"/>
</dbReference>
<dbReference type="RefSeq" id="XP_038946341.1">
    <property type="nucleotide sequence ID" value="XM_039090413.2"/>
</dbReference>
<dbReference type="FunCoup" id="Q8K1M8">
    <property type="interactions" value="1088"/>
</dbReference>
<dbReference type="STRING" id="10116.ENSRNOP00000007455"/>
<dbReference type="GlyCosmos" id="Q8K1M8">
    <property type="glycosylation" value="6 sites, No reported glycans"/>
</dbReference>
<dbReference type="GlyGen" id="Q8K1M8">
    <property type="glycosylation" value="6 sites"/>
</dbReference>
<dbReference type="iPTMnet" id="Q8K1M8"/>
<dbReference type="PhosphoSitePlus" id="Q8K1M8"/>
<dbReference type="PaxDb" id="10116-ENSRNOP00000007455"/>
<dbReference type="Ensembl" id="ENSRNOT00000007455.8">
    <property type="protein sequence ID" value="ENSRNOP00000007455.8"/>
    <property type="gene ID" value="ENSRNOG00000005592.9"/>
</dbReference>
<dbReference type="GeneID" id="286895"/>
<dbReference type="KEGG" id="rno:286895"/>
<dbReference type="UCSC" id="RGD:708419">
    <property type="organism name" value="rat"/>
</dbReference>
<dbReference type="AGR" id="RGD:708419"/>
<dbReference type="CTD" id="57795"/>
<dbReference type="RGD" id="708419">
    <property type="gene designation" value="Brinp2"/>
</dbReference>
<dbReference type="eggNOG" id="ENOG502QQZS">
    <property type="taxonomic scope" value="Eukaryota"/>
</dbReference>
<dbReference type="GeneTree" id="ENSGT00940000160314"/>
<dbReference type="InParanoid" id="Q8K1M8"/>
<dbReference type="OMA" id="LSACCRW"/>
<dbReference type="OrthoDB" id="10013872at2759"/>
<dbReference type="PhylomeDB" id="Q8K1M8"/>
<dbReference type="PRO" id="PR:Q8K1M8"/>
<dbReference type="Proteomes" id="UP000002494">
    <property type="component" value="Chromosome 13"/>
</dbReference>
<dbReference type="GO" id="GO:0005737">
    <property type="term" value="C:cytoplasm"/>
    <property type="evidence" value="ECO:0000318"/>
    <property type="project" value="GO_Central"/>
</dbReference>
<dbReference type="GO" id="GO:0030425">
    <property type="term" value="C:dendrite"/>
    <property type="evidence" value="ECO:0000314"/>
    <property type="project" value="RGD"/>
</dbReference>
<dbReference type="GO" id="GO:0005576">
    <property type="term" value="C:extracellular region"/>
    <property type="evidence" value="ECO:0007669"/>
    <property type="project" value="UniProtKB-SubCell"/>
</dbReference>
<dbReference type="GO" id="GO:0043025">
    <property type="term" value="C:neuronal cell body"/>
    <property type="evidence" value="ECO:0000314"/>
    <property type="project" value="RGD"/>
</dbReference>
<dbReference type="GO" id="GO:0071300">
    <property type="term" value="P:cellular response to retinoic acid"/>
    <property type="evidence" value="ECO:0000266"/>
    <property type="project" value="RGD"/>
</dbReference>
<dbReference type="GO" id="GO:0021953">
    <property type="term" value="P:central nervous system neuron differentiation"/>
    <property type="evidence" value="ECO:0000266"/>
    <property type="project" value="RGD"/>
</dbReference>
<dbReference type="GO" id="GO:0040011">
    <property type="term" value="P:locomotion"/>
    <property type="evidence" value="ECO:0000266"/>
    <property type="project" value="RGD"/>
</dbReference>
<dbReference type="GO" id="GO:0035264">
    <property type="term" value="P:multicellular organism growth"/>
    <property type="evidence" value="ECO:0000266"/>
    <property type="project" value="RGD"/>
</dbReference>
<dbReference type="GO" id="GO:0045786">
    <property type="term" value="P:negative regulation of cell cycle"/>
    <property type="evidence" value="ECO:0000315"/>
    <property type="project" value="RGD"/>
</dbReference>
<dbReference type="GO" id="GO:0045930">
    <property type="term" value="P:negative regulation of mitotic cell cycle"/>
    <property type="evidence" value="ECO:0000266"/>
    <property type="project" value="RGD"/>
</dbReference>
<dbReference type="GO" id="GO:0007399">
    <property type="term" value="P:nervous system development"/>
    <property type="evidence" value="ECO:0000270"/>
    <property type="project" value="RGD"/>
</dbReference>
<dbReference type="GO" id="GO:0045666">
    <property type="term" value="P:positive regulation of neuron differentiation"/>
    <property type="evidence" value="ECO:0007669"/>
    <property type="project" value="InterPro"/>
</dbReference>
<dbReference type="InterPro" id="IPR033237">
    <property type="entry name" value="BRINP"/>
</dbReference>
<dbReference type="InterPro" id="IPR020864">
    <property type="entry name" value="MACPF"/>
</dbReference>
<dbReference type="PANTHER" id="PTHR15564:SF8">
    <property type="entry name" value="BMP_RETINOIC ACID-INDUCIBLE NEURAL-SPECIFIC PROTEIN 2"/>
    <property type="match status" value="1"/>
</dbReference>
<dbReference type="PANTHER" id="PTHR15564">
    <property type="entry name" value="MACPF DOMAIN-CONTAINING PROTEIN"/>
    <property type="match status" value="1"/>
</dbReference>
<dbReference type="Pfam" id="PF19052">
    <property type="entry name" value="BRINP"/>
    <property type="match status" value="1"/>
</dbReference>
<dbReference type="Pfam" id="PF25415">
    <property type="entry name" value="EGF_BRNP1-3"/>
    <property type="match status" value="1"/>
</dbReference>
<dbReference type="Pfam" id="PF01823">
    <property type="entry name" value="MACPF"/>
    <property type="match status" value="1"/>
</dbReference>
<dbReference type="SMART" id="SM00457">
    <property type="entry name" value="MACPF"/>
    <property type="match status" value="1"/>
</dbReference>
<keyword id="KW-0131">Cell cycle</keyword>
<keyword id="KW-0325">Glycoprotein</keyword>
<keyword id="KW-0338">Growth arrest</keyword>
<keyword id="KW-1185">Reference proteome</keyword>
<keyword id="KW-0964">Secreted</keyword>
<keyword id="KW-0732">Signal</keyword>
<accession>Q8K1M8</accession>
<evidence type="ECO:0000250" key="1"/>
<evidence type="ECO:0000255" key="2"/>
<evidence type="ECO:0000269" key="3">
    <source>
    </source>
</evidence>
<evidence type="ECO:0000305" key="4"/>
<name>BRNP2_RAT</name>
<gene>
    <name type="primary">Brinp2</name>
    <name type="synonym">Fam5b</name>
</gene>
<sequence length="783" mass="89139">MRWPCSSRFRGLWPEAAPWAVLLALGVPGWVLAVSATVAAVVPEQHVSSAGQAPLDWLLTDRGPFHRAQEYADFMERYRQGFTTRYRIYREFARWKVNNLALERKDFFSLPLPLAPEFVRNIRLLGRRPNLQQVTENLIKKYGTHFLLSATLGGEESLTIFVDKRKLSRKSETLGGVPVVGGTGNSSAVSLETLHQLAASYFIDRESTLRRLHHIQIATGAIKVTETRTGPLGCSNYDNLDSVSSVLVQSPENKVQLLGLQVLLPEHLRERFVAAALSYITCSSEGELVCRENDCWCKCSPTFPECNCPDADIQAMEDSLLQIQDSWATHNRQFEESEEFQTLLKRLPSDRFLNSTAISQYWTMDANLQHRYQQLGASLKVLLKKMHRIVRRLFNLCKRCHRQPRFRLPKERSLSFWWNRIQSLLYCGESTFPGTFLEQSHSCTCPYDQSSCQGPIPCALGEGPACAHCASDNTTRCGSCNPGYVLAQGLCRPEVAESLENFLGLETDLQDLELKYLLQKRDSRIEVHSIFISNDMRLGSWFDPSWRKRMLLTLKSNKYKPGLVHVMLALSLQICLTKNSTLEPVMAIYVNPFGGSHSESWFMPVNEGSFPDWERTNVDAAAQCQNWTITLGNRWKTFFETVHVYLRSRIKSLDDSSNETIYYEPLEMTDPSKNLGYMKINTLQVFGYSLPFDPDAIRDLILQLDYPYTQGSQDSALLQLIELRDRVNQLSPPGKVRLDLFSCLLRHRLKLANNEVGRIQSSLRAFNSKLPNPVEYETGKLCS</sequence>
<organism>
    <name type="scientific">Rattus norvegicus</name>
    <name type="common">Rat</name>
    <dbReference type="NCBI Taxonomy" id="10116"/>
    <lineage>
        <taxon>Eukaryota</taxon>
        <taxon>Metazoa</taxon>
        <taxon>Chordata</taxon>
        <taxon>Craniata</taxon>
        <taxon>Vertebrata</taxon>
        <taxon>Euteleostomi</taxon>
        <taxon>Mammalia</taxon>
        <taxon>Eutheria</taxon>
        <taxon>Euarchontoglires</taxon>
        <taxon>Glires</taxon>
        <taxon>Rodentia</taxon>
        <taxon>Myomorpha</taxon>
        <taxon>Muroidea</taxon>
        <taxon>Muridae</taxon>
        <taxon>Murinae</taxon>
        <taxon>Rattus</taxon>
    </lineage>
</organism>